<protein>
    <recommendedName>
        <fullName evidence="1">SsrA-binding protein</fullName>
    </recommendedName>
    <alternativeName>
        <fullName evidence="1">Small protein B</fullName>
    </alternativeName>
</protein>
<dbReference type="EMBL" id="CP001083">
    <property type="protein sequence ID" value="ACQ54968.1"/>
    <property type="molecule type" value="Genomic_DNA"/>
</dbReference>
<dbReference type="RefSeq" id="WP_003356515.1">
    <property type="nucleotide sequence ID" value="NC_012658.1"/>
</dbReference>
<dbReference type="SMR" id="C3KZ53"/>
<dbReference type="GeneID" id="5184489"/>
<dbReference type="KEGG" id="cbi:CLJ_B0282"/>
<dbReference type="HOGENOM" id="CLU_108953_0_0_9"/>
<dbReference type="Proteomes" id="UP000002333">
    <property type="component" value="Chromosome"/>
</dbReference>
<dbReference type="GO" id="GO:0005829">
    <property type="term" value="C:cytosol"/>
    <property type="evidence" value="ECO:0007669"/>
    <property type="project" value="TreeGrafter"/>
</dbReference>
<dbReference type="GO" id="GO:0003723">
    <property type="term" value="F:RNA binding"/>
    <property type="evidence" value="ECO:0007669"/>
    <property type="project" value="UniProtKB-UniRule"/>
</dbReference>
<dbReference type="GO" id="GO:0070929">
    <property type="term" value="P:trans-translation"/>
    <property type="evidence" value="ECO:0007669"/>
    <property type="project" value="UniProtKB-UniRule"/>
</dbReference>
<dbReference type="CDD" id="cd09294">
    <property type="entry name" value="SmpB"/>
    <property type="match status" value="1"/>
</dbReference>
<dbReference type="Gene3D" id="2.40.280.10">
    <property type="match status" value="1"/>
</dbReference>
<dbReference type="HAMAP" id="MF_00023">
    <property type="entry name" value="SmpB"/>
    <property type="match status" value="1"/>
</dbReference>
<dbReference type="InterPro" id="IPR023620">
    <property type="entry name" value="SmpB"/>
</dbReference>
<dbReference type="InterPro" id="IPR000037">
    <property type="entry name" value="SsrA-bd_prot"/>
</dbReference>
<dbReference type="InterPro" id="IPR020081">
    <property type="entry name" value="SsrA-bd_prot_CS"/>
</dbReference>
<dbReference type="NCBIfam" id="NF003843">
    <property type="entry name" value="PRK05422.1"/>
    <property type="match status" value="1"/>
</dbReference>
<dbReference type="NCBIfam" id="TIGR00086">
    <property type="entry name" value="smpB"/>
    <property type="match status" value="1"/>
</dbReference>
<dbReference type="PANTHER" id="PTHR30308:SF2">
    <property type="entry name" value="SSRA-BINDING PROTEIN"/>
    <property type="match status" value="1"/>
</dbReference>
<dbReference type="PANTHER" id="PTHR30308">
    <property type="entry name" value="TMRNA-BINDING COMPONENT OF TRANS-TRANSLATION TAGGING COMPLEX"/>
    <property type="match status" value="1"/>
</dbReference>
<dbReference type="Pfam" id="PF01668">
    <property type="entry name" value="SmpB"/>
    <property type="match status" value="1"/>
</dbReference>
<dbReference type="SUPFAM" id="SSF74982">
    <property type="entry name" value="Small protein B (SmpB)"/>
    <property type="match status" value="1"/>
</dbReference>
<dbReference type="PROSITE" id="PS01317">
    <property type="entry name" value="SSRP"/>
    <property type="match status" value="1"/>
</dbReference>
<reference key="1">
    <citation type="submission" date="2008-05" db="EMBL/GenBank/DDBJ databases">
        <title>Genome sequence of Clostridium botulinum Ba4 strain 657.</title>
        <authorList>
            <person name="Shrivastava S."/>
            <person name="Brown J.L."/>
            <person name="Bruce D."/>
            <person name="Detter C."/>
            <person name="Munk C."/>
            <person name="Smith L.A."/>
            <person name="Smith T.J."/>
            <person name="Sutton G."/>
            <person name="Brettin T.S."/>
        </authorList>
    </citation>
    <scope>NUCLEOTIDE SEQUENCE [LARGE SCALE GENOMIC DNA]</scope>
    <source>
        <strain>657 / Type Ba4</strain>
    </source>
</reference>
<comment type="function">
    <text evidence="1">Required for rescue of stalled ribosomes mediated by trans-translation. Binds to transfer-messenger RNA (tmRNA), required for stable association of tmRNA with ribosomes. tmRNA and SmpB together mimic tRNA shape, replacing the anticodon stem-loop with SmpB. tmRNA is encoded by the ssrA gene; the 2 termini fold to resemble tRNA(Ala) and it encodes a 'tag peptide', a short internal open reading frame. During trans-translation Ala-aminoacylated tmRNA acts like a tRNA, entering the A-site of stalled ribosomes, displacing the stalled mRNA. The ribosome then switches to translate the ORF on the tmRNA; the nascent peptide is terminated with the 'tag peptide' encoded by the tmRNA and targeted for degradation. The ribosome is freed to recommence translation, which seems to be the essential function of trans-translation.</text>
</comment>
<comment type="subcellular location">
    <subcellularLocation>
        <location evidence="1">Cytoplasm</location>
    </subcellularLocation>
    <text evidence="1">The tmRNA-SmpB complex associates with stalled 70S ribosomes.</text>
</comment>
<comment type="similarity">
    <text evidence="1">Belongs to the SmpB family.</text>
</comment>
<name>SSRP_CLOB6</name>
<keyword id="KW-0963">Cytoplasm</keyword>
<keyword id="KW-0694">RNA-binding</keyword>
<accession>C3KZ53</accession>
<proteinExistence type="inferred from homology"/>
<evidence type="ECO:0000255" key="1">
    <source>
        <dbReference type="HAMAP-Rule" id="MF_00023"/>
    </source>
</evidence>
<organism>
    <name type="scientific">Clostridium botulinum (strain 657 / Type Ba4)</name>
    <dbReference type="NCBI Taxonomy" id="515621"/>
    <lineage>
        <taxon>Bacteria</taxon>
        <taxon>Bacillati</taxon>
        <taxon>Bacillota</taxon>
        <taxon>Clostridia</taxon>
        <taxon>Eubacteriales</taxon>
        <taxon>Clostridiaceae</taxon>
        <taxon>Clostridium</taxon>
    </lineage>
</organism>
<sequence>MSKKKGSNTLAENRKARHDYFIEETYEAGIELVGTEVKSIRQGKANLKDSYAEIRNGEVFVRNMHISPYEQGNIYNKDPLRDRKLLLHKSEIYKLVGFTTQQGYTLIPLSLYLKHGRVKVSLAVAKGKKNYDKRDAMLEKAAKREMDRQIKERSRY</sequence>
<gene>
    <name evidence="1" type="primary">smpB</name>
    <name type="ordered locus">CLJ_B0282</name>
</gene>
<feature type="chain" id="PRO_1000201928" description="SsrA-binding protein">
    <location>
        <begin position="1"/>
        <end position="156"/>
    </location>
</feature>